<evidence type="ECO:0000255" key="1">
    <source>
        <dbReference type="HAMAP-Rule" id="MF_00252"/>
    </source>
</evidence>
<feature type="chain" id="PRO_1000012906" description="Lysine--tRNA ligase">
    <location>
        <begin position="1"/>
        <end position="500"/>
    </location>
</feature>
<feature type="binding site" evidence="1">
    <location>
        <position position="410"/>
    </location>
    <ligand>
        <name>Mg(2+)</name>
        <dbReference type="ChEBI" id="CHEBI:18420"/>
        <label>1</label>
    </ligand>
</feature>
<feature type="binding site" evidence="1">
    <location>
        <position position="417"/>
    </location>
    <ligand>
        <name>Mg(2+)</name>
        <dbReference type="ChEBI" id="CHEBI:18420"/>
        <label>1</label>
    </ligand>
</feature>
<feature type="binding site" evidence="1">
    <location>
        <position position="417"/>
    </location>
    <ligand>
        <name>Mg(2+)</name>
        <dbReference type="ChEBI" id="CHEBI:18420"/>
        <label>2</label>
    </ligand>
</feature>
<sequence>MSDQQLDPQALQQEENTLIALRKEKLAAGRAKGQAFPNDFRRDSYCNDLQKQYVDKTKEELAEAAIPVKVAGRIMLNRGSFMVIQDMTGRIQVYVNRKTLAEETLAEVKTWDLGDIIAAEGTLARSGKGDLYVEMTTVRLLTKSLRPLPDKHHGLTDTEQRYRQRYVDLIVNEDVRETFRVRSQVIAHIRSFLMKRDFLEVETPMLQTIPGGAAAKPFETHHNALDMEMFLRIAPELYLKRLVVGGFEKVFEINRNFRNEGVSTRHNPEFTMLEFYQAYADYEDNMDLTEELFRELAQLVLGTTDVPYGDKVFHFGEPFVRLSVFDSILKYNPDLTAADLQDVDKARAIAKKAGAKVLGFEGLGKLQVMIFEELVEHKLKQPHFITQYPFEVSPLARRNDENPSVTDRFELFIGGREIANAYSELNDAEDQAERFQAQVADKDAGDDEAMHYDADFVRALEYGMPPTAGEGIGIDRLVMLLTDSPSIRDVILFPHMRPQA</sequence>
<accession>Q48F26</accession>
<dbReference type="EC" id="6.1.1.6" evidence="1"/>
<dbReference type="EMBL" id="CP000058">
    <property type="protein sequence ID" value="AAZ33422.1"/>
    <property type="molecule type" value="Genomic_DNA"/>
</dbReference>
<dbReference type="RefSeq" id="WP_011169316.1">
    <property type="nucleotide sequence ID" value="NC_005773.3"/>
</dbReference>
<dbReference type="SMR" id="Q48F26"/>
<dbReference type="KEGG" id="psp:PSPPH_3873"/>
<dbReference type="eggNOG" id="COG1190">
    <property type="taxonomic scope" value="Bacteria"/>
</dbReference>
<dbReference type="HOGENOM" id="CLU_008255_6_0_6"/>
<dbReference type="Proteomes" id="UP000000551">
    <property type="component" value="Chromosome"/>
</dbReference>
<dbReference type="GO" id="GO:0005829">
    <property type="term" value="C:cytosol"/>
    <property type="evidence" value="ECO:0007669"/>
    <property type="project" value="TreeGrafter"/>
</dbReference>
<dbReference type="GO" id="GO:0005524">
    <property type="term" value="F:ATP binding"/>
    <property type="evidence" value="ECO:0007669"/>
    <property type="project" value="UniProtKB-UniRule"/>
</dbReference>
<dbReference type="GO" id="GO:0004824">
    <property type="term" value="F:lysine-tRNA ligase activity"/>
    <property type="evidence" value="ECO:0007669"/>
    <property type="project" value="UniProtKB-UniRule"/>
</dbReference>
<dbReference type="GO" id="GO:0000287">
    <property type="term" value="F:magnesium ion binding"/>
    <property type="evidence" value="ECO:0007669"/>
    <property type="project" value="UniProtKB-UniRule"/>
</dbReference>
<dbReference type="GO" id="GO:0000049">
    <property type="term" value="F:tRNA binding"/>
    <property type="evidence" value="ECO:0007669"/>
    <property type="project" value="TreeGrafter"/>
</dbReference>
<dbReference type="GO" id="GO:0006430">
    <property type="term" value="P:lysyl-tRNA aminoacylation"/>
    <property type="evidence" value="ECO:0007669"/>
    <property type="project" value="UniProtKB-UniRule"/>
</dbReference>
<dbReference type="CDD" id="cd00775">
    <property type="entry name" value="LysRS_core"/>
    <property type="match status" value="1"/>
</dbReference>
<dbReference type="CDD" id="cd04322">
    <property type="entry name" value="LysRS_N"/>
    <property type="match status" value="1"/>
</dbReference>
<dbReference type="FunFam" id="2.40.50.140:FF:000024">
    <property type="entry name" value="Lysine--tRNA ligase"/>
    <property type="match status" value="1"/>
</dbReference>
<dbReference type="FunFam" id="3.30.930.10:FF:000001">
    <property type="entry name" value="Lysine--tRNA ligase"/>
    <property type="match status" value="1"/>
</dbReference>
<dbReference type="Gene3D" id="3.30.930.10">
    <property type="entry name" value="Bira Bifunctional Protein, Domain 2"/>
    <property type="match status" value="1"/>
</dbReference>
<dbReference type="Gene3D" id="2.40.50.140">
    <property type="entry name" value="Nucleic acid-binding proteins"/>
    <property type="match status" value="1"/>
</dbReference>
<dbReference type="HAMAP" id="MF_00252">
    <property type="entry name" value="Lys_tRNA_synth_class2"/>
    <property type="match status" value="1"/>
</dbReference>
<dbReference type="InterPro" id="IPR004364">
    <property type="entry name" value="Aa-tRNA-synt_II"/>
</dbReference>
<dbReference type="InterPro" id="IPR006195">
    <property type="entry name" value="aa-tRNA-synth_II"/>
</dbReference>
<dbReference type="InterPro" id="IPR045864">
    <property type="entry name" value="aa-tRNA-synth_II/BPL/LPL"/>
</dbReference>
<dbReference type="InterPro" id="IPR002313">
    <property type="entry name" value="Lys-tRNA-ligase_II"/>
</dbReference>
<dbReference type="InterPro" id="IPR044136">
    <property type="entry name" value="Lys-tRNA-ligase_II_N"/>
</dbReference>
<dbReference type="InterPro" id="IPR018149">
    <property type="entry name" value="Lys-tRNA-synth_II_C"/>
</dbReference>
<dbReference type="InterPro" id="IPR012340">
    <property type="entry name" value="NA-bd_OB-fold"/>
</dbReference>
<dbReference type="InterPro" id="IPR004365">
    <property type="entry name" value="NA-bd_OB_tRNA"/>
</dbReference>
<dbReference type="NCBIfam" id="TIGR00499">
    <property type="entry name" value="lysS_bact"/>
    <property type="match status" value="1"/>
</dbReference>
<dbReference type="NCBIfam" id="NF001756">
    <property type="entry name" value="PRK00484.1"/>
    <property type="match status" value="1"/>
</dbReference>
<dbReference type="PANTHER" id="PTHR42918:SF15">
    <property type="entry name" value="LYSINE--TRNA LIGASE, CHLOROPLASTIC_MITOCHONDRIAL"/>
    <property type="match status" value="1"/>
</dbReference>
<dbReference type="PANTHER" id="PTHR42918">
    <property type="entry name" value="LYSYL-TRNA SYNTHETASE"/>
    <property type="match status" value="1"/>
</dbReference>
<dbReference type="Pfam" id="PF00152">
    <property type="entry name" value="tRNA-synt_2"/>
    <property type="match status" value="1"/>
</dbReference>
<dbReference type="Pfam" id="PF01336">
    <property type="entry name" value="tRNA_anti-codon"/>
    <property type="match status" value="1"/>
</dbReference>
<dbReference type="PRINTS" id="PR00982">
    <property type="entry name" value="TRNASYNTHLYS"/>
</dbReference>
<dbReference type="SUPFAM" id="SSF55681">
    <property type="entry name" value="Class II aaRS and biotin synthetases"/>
    <property type="match status" value="1"/>
</dbReference>
<dbReference type="SUPFAM" id="SSF50249">
    <property type="entry name" value="Nucleic acid-binding proteins"/>
    <property type="match status" value="1"/>
</dbReference>
<dbReference type="PROSITE" id="PS50862">
    <property type="entry name" value="AA_TRNA_LIGASE_II"/>
    <property type="match status" value="1"/>
</dbReference>
<reference key="1">
    <citation type="journal article" date="2005" name="J. Bacteriol.">
        <title>Whole-genome sequence analysis of Pseudomonas syringae pv. phaseolicola 1448A reveals divergence among pathovars in genes involved in virulence and transposition.</title>
        <authorList>
            <person name="Joardar V."/>
            <person name="Lindeberg M."/>
            <person name="Jackson R.W."/>
            <person name="Selengut J."/>
            <person name="Dodson R."/>
            <person name="Brinkac L.M."/>
            <person name="Daugherty S.C."/>
            <person name="DeBoy R.T."/>
            <person name="Durkin A.S."/>
            <person name="Gwinn Giglio M."/>
            <person name="Madupu R."/>
            <person name="Nelson W.C."/>
            <person name="Rosovitz M.J."/>
            <person name="Sullivan S.A."/>
            <person name="Crabtree J."/>
            <person name="Creasy T."/>
            <person name="Davidsen T.M."/>
            <person name="Haft D.H."/>
            <person name="Zafar N."/>
            <person name="Zhou L."/>
            <person name="Halpin R."/>
            <person name="Holley T."/>
            <person name="Khouri H.M."/>
            <person name="Feldblyum T.V."/>
            <person name="White O."/>
            <person name="Fraser C.M."/>
            <person name="Chatterjee A.K."/>
            <person name="Cartinhour S."/>
            <person name="Schneider D."/>
            <person name="Mansfield J.W."/>
            <person name="Collmer A."/>
            <person name="Buell R."/>
        </authorList>
    </citation>
    <scope>NUCLEOTIDE SEQUENCE [LARGE SCALE GENOMIC DNA]</scope>
    <source>
        <strain>1448A / Race 6</strain>
    </source>
</reference>
<organism>
    <name type="scientific">Pseudomonas savastanoi pv. phaseolicola (strain 1448A / Race 6)</name>
    <name type="common">Pseudomonas syringae pv. phaseolicola (strain 1448A / Race 6)</name>
    <dbReference type="NCBI Taxonomy" id="264730"/>
    <lineage>
        <taxon>Bacteria</taxon>
        <taxon>Pseudomonadati</taxon>
        <taxon>Pseudomonadota</taxon>
        <taxon>Gammaproteobacteria</taxon>
        <taxon>Pseudomonadales</taxon>
        <taxon>Pseudomonadaceae</taxon>
        <taxon>Pseudomonas</taxon>
    </lineage>
</organism>
<name>SYK_PSE14</name>
<gene>
    <name evidence="1" type="primary">lysS</name>
    <name type="ordered locus">PSPPH_3873</name>
</gene>
<keyword id="KW-0030">Aminoacyl-tRNA synthetase</keyword>
<keyword id="KW-0067">ATP-binding</keyword>
<keyword id="KW-0963">Cytoplasm</keyword>
<keyword id="KW-0436">Ligase</keyword>
<keyword id="KW-0460">Magnesium</keyword>
<keyword id="KW-0479">Metal-binding</keyword>
<keyword id="KW-0547">Nucleotide-binding</keyword>
<keyword id="KW-0648">Protein biosynthesis</keyword>
<comment type="catalytic activity">
    <reaction evidence="1">
        <text>tRNA(Lys) + L-lysine + ATP = L-lysyl-tRNA(Lys) + AMP + diphosphate</text>
        <dbReference type="Rhea" id="RHEA:20792"/>
        <dbReference type="Rhea" id="RHEA-COMP:9696"/>
        <dbReference type="Rhea" id="RHEA-COMP:9697"/>
        <dbReference type="ChEBI" id="CHEBI:30616"/>
        <dbReference type="ChEBI" id="CHEBI:32551"/>
        <dbReference type="ChEBI" id="CHEBI:33019"/>
        <dbReference type="ChEBI" id="CHEBI:78442"/>
        <dbReference type="ChEBI" id="CHEBI:78529"/>
        <dbReference type="ChEBI" id="CHEBI:456215"/>
        <dbReference type="EC" id="6.1.1.6"/>
    </reaction>
</comment>
<comment type="cofactor">
    <cofactor evidence="1">
        <name>Mg(2+)</name>
        <dbReference type="ChEBI" id="CHEBI:18420"/>
    </cofactor>
    <text evidence="1">Binds 3 Mg(2+) ions per subunit.</text>
</comment>
<comment type="subunit">
    <text evidence="1">Homodimer.</text>
</comment>
<comment type="subcellular location">
    <subcellularLocation>
        <location evidence="1">Cytoplasm</location>
    </subcellularLocation>
</comment>
<comment type="similarity">
    <text evidence="1">Belongs to the class-II aminoacyl-tRNA synthetase family.</text>
</comment>
<protein>
    <recommendedName>
        <fullName evidence="1">Lysine--tRNA ligase</fullName>
        <ecNumber evidence="1">6.1.1.6</ecNumber>
    </recommendedName>
    <alternativeName>
        <fullName evidence="1">Lysyl-tRNA synthetase</fullName>
        <shortName evidence="1">LysRS</shortName>
    </alternativeName>
</protein>
<proteinExistence type="inferred from homology"/>